<organism>
    <name type="scientific">Streptomyces coelicolor (strain ATCC BAA-471 / A3(2) / M145)</name>
    <dbReference type="NCBI Taxonomy" id="100226"/>
    <lineage>
        <taxon>Bacteria</taxon>
        <taxon>Bacillati</taxon>
        <taxon>Actinomycetota</taxon>
        <taxon>Actinomycetes</taxon>
        <taxon>Kitasatosporales</taxon>
        <taxon>Streptomycetaceae</taxon>
        <taxon>Streptomyces</taxon>
        <taxon>Streptomyces albidoflavus group</taxon>
    </lineage>
</organism>
<reference key="1">
    <citation type="journal article" date="2002" name="Nature">
        <title>Complete genome sequence of the model actinomycete Streptomyces coelicolor A3(2).</title>
        <authorList>
            <person name="Bentley S.D."/>
            <person name="Chater K.F."/>
            <person name="Cerdeno-Tarraga A.-M."/>
            <person name="Challis G.L."/>
            <person name="Thomson N.R."/>
            <person name="James K.D."/>
            <person name="Harris D.E."/>
            <person name="Quail M.A."/>
            <person name="Kieser H."/>
            <person name="Harper D."/>
            <person name="Bateman A."/>
            <person name="Brown S."/>
            <person name="Chandra G."/>
            <person name="Chen C.W."/>
            <person name="Collins M."/>
            <person name="Cronin A."/>
            <person name="Fraser A."/>
            <person name="Goble A."/>
            <person name="Hidalgo J."/>
            <person name="Hornsby T."/>
            <person name="Howarth S."/>
            <person name="Huang C.-H."/>
            <person name="Kieser T."/>
            <person name="Larke L."/>
            <person name="Murphy L.D."/>
            <person name="Oliver K."/>
            <person name="O'Neil S."/>
            <person name="Rabbinowitsch E."/>
            <person name="Rajandream M.A."/>
            <person name="Rutherford K.M."/>
            <person name="Rutter S."/>
            <person name="Seeger K."/>
            <person name="Saunders D."/>
            <person name="Sharp S."/>
            <person name="Squares R."/>
            <person name="Squares S."/>
            <person name="Taylor K."/>
            <person name="Warren T."/>
            <person name="Wietzorrek A."/>
            <person name="Woodward J.R."/>
            <person name="Barrell B.G."/>
            <person name="Parkhill J."/>
            <person name="Hopwood D.A."/>
        </authorList>
    </citation>
    <scope>NUCLEOTIDE SEQUENCE [LARGE SCALE GENOMIC DNA]</scope>
    <source>
        <strain>ATCC BAA-471 / A3(2) / M145</strain>
    </source>
</reference>
<reference key="2">
    <citation type="submission" date="2019-07" db="EMBL/GenBank/DDBJ databases">
        <title>Genome sequencing of Streptomyces strains engineered using actinophage integration system.</title>
        <authorList>
            <person name="Yuzawa S."/>
        </authorList>
    </citation>
    <scope>NUCLEOTIDE SEQUENCE [LARGE SCALE GENOMIC DNA]</scope>
    <source>
        <strain>A3(2) / ICSSB 1010</strain>
    </source>
</reference>
<reference key="3">
    <citation type="journal article" date="2001" name="Chem. Biol.">
        <title>Analysis of the prodiginine biosynthesis gene cluster of Streptomyces coelicolor A3(2): new mechanisms for chain initiation and termination in modular multienzymes.</title>
        <authorList>
            <person name="Cerdeno A.M."/>
            <person name="Bibb M.J."/>
            <person name="Challis G.L."/>
        </authorList>
    </citation>
    <scope>GENE CLUSTER</scope>
    <scope>FUNCTION</scope>
</reference>
<reference key="4">
    <citation type="journal article" date="2002" name="Chem. Biol.">
        <title>Conversion of L-proline to pyrrolyl-2-carboxyl-S-PCP during undecylprodigiosin and pyoluteorin biosynthesis.</title>
        <authorList>
            <person name="Thomas M.G."/>
            <person name="Burkart M.D."/>
            <person name="Walsh C.T."/>
        </authorList>
    </citation>
    <scope>FUNCTION</scope>
    <scope>CATALYTIC ACTIVITY</scope>
</reference>
<dbReference type="EC" id="6.2.1.53" evidence="3"/>
<dbReference type="EMBL" id="AL939125">
    <property type="protein sequence ID" value="CAA16182.1"/>
    <property type="molecule type" value="Genomic_DNA"/>
</dbReference>
<dbReference type="EMBL" id="VNID01000007">
    <property type="protein sequence ID" value="TYP13356.1"/>
    <property type="molecule type" value="Genomic_DNA"/>
</dbReference>
<dbReference type="PIR" id="T34917">
    <property type="entry name" value="T34917"/>
</dbReference>
<dbReference type="RefSeq" id="NP_630012.1">
    <property type="nucleotide sequence ID" value="NC_003888.3"/>
</dbReference>
<dbReference type="RefSeq" id="WP_011030516.1">
    <property type="nucleotide sequence ID" value="NZ_VNID01000007.1"/>
</dbReference>
<dbReference type="SMR" id="O54154"/>
<dbReference type="STRING" id="100226.gene:17763551"/>
<dbReference type="PaxDb" id="100226-SCO5891"/>
<dbReference type="KEGG" id="sco:SCO5891"/>
<dbReference type="PATRIC" id="fig|100226.15.peg.5990"/>
<dbReference type="eggNOG" id="COG1020">
    <property type="taxonomic scope" value="Bacteria"/>
</dbReference>
<dbReference type="HOGENOM" id="CLU_000022_2_12_11"/>
<dbReference type="InParanoid" id="O54154"/>
<dbReference type="OrthoDB" id="2472181at2"/>
<dbReference type="PhylomeDB" id="O54154"/>
<dbReference type="Proteomes" id="UP000001973">
    <property type="component" value="Chromosome"/>
</dbReference>
<dbReference type="GO" id="GO:0005524">
    <property type="term" value="F:ATP binding"/>
    <property type="evidence" value="ECO:0007669"/>
    <property type="project" value="UniProtKB-KW"/>
</dbReference>
<dbReference type="GO" id="GO:0016874">
    <property type="term" value="F:ligase activity"/>
    <property type="evidence" value="ECO:0007669"/>
    <property type="project" value="UniProtKB-KW"/>
</dbReference>
<dbReference type="CDD" id="cd05945">
    <property type="entry name" value="DltA"/>
    <property type="match status" value="1"/>
</dbReference>
<dbReference type="FunFam" id="3.40.50.12780:FF:000133">
    <property type="entry name" value="D-alanine--poly(Phosphoribitol) ligase"/>
    <property type="match status" value="1"/>
</dbReference>
<dbReference type="Gene3D" id="3.30.300.30">
    <property type="match status" value="1"/>
</dbReference>
<dbReference type="Gene3D" id="3.40.50.12780">
    <property type="entry name" value="N-terminal domain of ligase-like"/>
    <property type="match status" value="1"/>
</dbReference>
<dbReference type="InterPro" id="IPR010071">
    <property type="entry name" value="AA_adenyl_dom"/>
</dbReference>
<dbReference type="InterPro" id="IPR025110">
    <property type="entry name" value="AMP-bd_C"/>
</dbReference>
<dbReference type="InterPro" id="IPR045851">
    <property type="entry name" value="AMP-bd_C_sf"/>
</dbReference>
<dbReference type="InterPro" id="IPR020845">
    <property type="entry name" value="AMP-binding_CS"/>
</dbReference>
<dbReference type="InterPro" id="IPR000873">
    <property type="entry name" value="AMP-dep_synth/lig_dom"/>
</dbReference>
<dbReference type="InterPro" id="IPR042099">
    <property type="entry name" value="ANL_N_sf"/>
</dbReference>
<dbReference type="InterPro" id="IPR044507">
    <property type="entry name" value="DltA-like"/>
</dbReference>
<dbReference type="NCBIfam" id="TIGR01733">
    <property type="entry name" value="AA-adenyl-dom"/>
    <property type="match status" value="1"/>
</dbReference>
<dbReference type="PANTHER" id="PTHR45527:SF1">
    <property type="entry name" value="FATTY ACID SYNTHASE"/>
    <property type="match status" value="1"/>
</dbReference>
<dbReference type="PANTHER" id="PTHR45527">
    <property type="entry name" value="NONRIBOSOMAL PEPTIDE SYNTHETASE"/>
    <property type="match status" value="1"/>
</dbReference>
<dbReference type="Pfam" id="PF00501">
    <property type="entry name" value="AMP-binding"/>
    <property type="match status" value="1"/>
</dbReference>
<dbReference type="Pfam" id="PF13193">
    <property type="entry name" value="AMP-binding_C"/>
    <property type="match status" value="1"/>
</dbReference>
<dbReference type="SUPFAM" id="SSF56801">
    <property type="entry name" value="Acetyl-CoA synthetase-like"/>
    <property type="match status" value="1"/>
</dbReference>
<dbReference type="PROSITE" id="PS00455">
    <property type="entry name" value="AMP_BINDING"/>
    <property type="match status" value="1"/>
</dbReference>
<proteinExistence type="evidence at protein level"/>
<comment type="function">
    <text evidence="2 3">Involved in the biosynthesis of undecylprodigiosin (PubMed:11514230, PubMed:11880032). Catalyzes the conversion of L-proline to L-prolyl-AMP and the transfer of the L-prolyl group to acyl carrier protein RedO (PubMed:11880032).</text>
</comment>
<comment type="catalytic activity">
    <reaction evidence="3">
        <text>holo-[peptidyl-carrier protein] + L-proline + ATP = L-prolyl-[peptidyl-carrier protein] + AMP + diphosphate</text>
        <dbReference type="Rhea" id="RHEA:11656"/>
        <dbReference type="Rhea" id="RHEA-COMP:11480"/>
        <dbReference type="Rhea" id="RHEA-COMP:14109"/>
        <dbReference type="ChEBI" id="CHEBI:30616"/>
        <dbReference type="ChEBI" id="CHEBI:33019"/>
        <dbReference type="ChEBI" id="CHEBI:60039"/>
        <dbReference type="ChEBI" id="CHEBI:64479"/>
        <dbReference type="ChEBI" id="CHEBI:138622"/>
        <dbReference type="ChEBI" id="CHEBI:456215"/>
        <dbReference type="EC" id="6.2.1.53"/>
    </reaction>
</comment>
<comment type="similarity">
    <text evidence="6">Belongs to the ATP-dependent AMP-binding enzyme family.</text>
</comment>
<sequence length="532" mass="56886">MSAATPSVIRLPRDTSAQHAARPAFVGSDPLTYGEFTARVEAVAARLLSLGTRTGDRIAVWMDKQPRYAEAIVAALEAGCAYVPLDGGQPVSRVRTILADAEPVVLFTDAHHAALLGDDDLPASVTTVVAVGDALPDTVGGIPVAPWESWEQGRAGRVTLLPSLTPGDLAALLYTSGSTGTPKGVQISHGALANFVAWARDELDVGPDDVFAGHASFNFDLSTFDLFTALSCGAAVWIVPDAATKDVTALAEGIRRHRITVWYSVPSVLHLLTTSAALTPEHAASLRYVLFAGEVFPVPQLRALRELLPPGTPLYNLYGPTETNVCTYHRVRPEDLHRATPVPIGLPITGAGTTVVDDAGRTVREPGAIGELHVSGVCVTPGYWRRAEEPVSTAHCRGVHPTGDLVSYEEDGRLVYRGRKDRMVKLSGYRVELGEIEAAALRHPGIAEAAVLVDGSGPKARLRLYYTLCEGAERIGLVELKQHCARHLPTYMVPHGAVRLDRMPLNPNGKTDYRRLGLDAPPRPAAPLGTAR</sequence>
<keyword id="KW-0067">ATP-binding</keyword>
<keyword id="KW-0436">Ligase</keyword>
<keyword id="KW-0547">Nucleotide-binding</keyword>
<keyword id="KW-1185">Reference proteome</keyword>
<gene>
    <name evidence="4" type="primary">redM</name>
    <name evidence="7" type="ordered locus">SCO5891</name>
    <name type="ORF">FHV98_107150</name>
</gene>
<feature type="chain" id="PRO_0000448664" description="L-proline--[L-prolyl-carrier protein] ligase">
    <location>
        <begin position="1"/>
        <end position="532"/>
    </location>
</feature>
<feature type="region of interest" description="Disordered" evidence="1">
    <location>
        <begin position="510"/>
        <end position="532"/>
    </location>
</feature>
<evidence type="ECO:0000256" key="1">
    <source>
        <dbReference type="SAM" id="MobiDB-lite"/>
    </source>
</evidence>
<evidence type="ECO:0000269" key="2">
    <source>
    </source>
</evidence>
<evidence type="ECO:0000269" key="3">
    <source>
    </source>
</evidence>
<evidence type="ECO:0000303" key="4">
    <source>
    </source>
</evidence>
<evidence type="ECO:0000303" key="5">
    <source>
    </source>
</evidence>
<evidence type="ECO:0000305" key="6"/>
<evidence type="ECO:0000312" key="7">
    <source>
        <dbReference type="EMBL" id="CAA16182.1"/>
    </source>
</evidence>
<protein>
    <recommendedName>
        <fullName evidence="6">L-proline--[L-prolyl-carrier protein] ligase</fullName>
        <ecNumber evidence="3">6.2.1.53</ecNumber>
    </recommendedName>
    <alternativeName>
        <fullName evidence="5">L-prolyl-AMP ligase</fullName>
    </alternativeName>
</protein>
<accession>O54154</accession>
<name>REDM_STRCO</name>